<sequence length="267" mass="29363">MEIKVLAKRKVSAKRANEILGKFILERKANEENRLFLSGNATPTEDLFQIVSNSLNKFQNHLNESINPELALTENNNNNNTTNGDSSDEALIPMSDDQPNPLKDSSNTLQIDDGDVSERYSDSVSSSTTTTIITNNKKINNNNNNKSKDIDSSNSTESENEKSVQKSKKEKESPKKLTKSKKSKKQESSDESSSESSSSSSSSSSSESSSSESESSSSSEDEKKKKKKKSSSTSSKKSSSKKRKVESSDDSDSSSSEEEKKKKKKKK</sequence>
<evidence type="ECO:0000256" key="1">
    <source>
        <dbReference type="SAM" id="MobiDB-lite"/>
    </source>
</evidence>
<organism>
    <name type="scientific">Dictyostelium discoideum</name>
    <name type="common">Social amoeba</name>
    <dbReference type="NCBI Taxonomy" id="44689"/>
    <lineage>
        <taxon>Eukaryota</taxon>
        <taxon>Amoebozoa</taxon>
        <taxon>Evosea</taxon>
        <taxon>Eumycetozoa</taxon>
        <taxon>Dictyostelia</taxon>
        <taxon>Dictyosteliales</taxon>
        <taxon>Dictyosteliaceae</taxon>
        <taxon>Dictyostelium</taxon>
    </lineage>
</organism>
<keyword id="KW-1185">Reference proteome</keyword>
<proteinExistence type="predicted"/>
<accession>Q54V71</accession>
<dbReference type="EMBL" id="AAFI02000037">
    <property type="protein sequence ID" value="EAL67091.1"/>
    <property type="molecule type" value="Genomic_DNA"/>
</dbReference>
<dbReference type="RefSeq" id="XP_641060.1">
    <property type="nucleotide sequence ID" value="XM_635968.1"/>
</dbReference>
<dbReference type="PaxDb" id="44689-DDB0206053"/>
<dbReference type="EnsemblProtists" id="EAL67091">
    <property type="protein sequence ID" value="EAL67091"/>
    <property type="gene ID" value="DDB_G0280579"/>
</dbReference>
<dbReference type="GeneID" id="8622618"/>
<dbReference type="KEGG" id="ddi:DDB_G0280579"/>
<dbReference type="dictyBase" id="DDB_G0280579"/>
<dbReference type="VEuPathDB" id="AmoebaDB:DDB_G0280579"/>
<dbReference type="eggNOG" id="ENOG502RH59">
    <property type="taxonomic scope" value="Eukaryota"/>
</dbReference>
<dbReference type="HOGENOM" id="CLU_1043653_0_0_1"/>
<dbReference type="InParanoid" id="Q54V71"/>
<dbReference type="OMA" id="MEIKVIS"/>
<dbReference type="PRO" id="PR:Q54V71"/>
<dbReference type="Proteomes" id="UP000002195">
    <property type="component" value="Chromosome 3"/>
</dbReference>
<feature type="chain" id="PRO_0000352444" description="Uncharacterized protein DDB_G0280579">
    <location>
        <begin position="1"/>
        <end position="267"/>
    </location>
</feature>
<feature type="region of interest" description="Disordered" evidence="1">
    <location>
        <begin position="72"/>
        <end position="267"/>
    </location>
</feature>
<feature type="compositionally biased region" description="Low complexity" evidence="1">
    <location>
        <begin position="122"/>
        <end position="145"/>
    </location>
</feature>
<feature type="compositionally biased region" description="Basic and acidic residues" evidence="1">
    <location>
        <begin position="159"/>
        <end position="175"/>
    </location>
</feature>
<feature type="compositionally biased region" description="Low complexity" evidence="1">
    <location>
        <begin position="194"/>
        <end position="218"/>
    </location>
</feature>
<reference key="1">
    <citation type="journal article" date="2005" name="Nature">
        <title>The genome of the social amoeba Dictyostelium discoideum.</title>
        <authorList>
            <person name="Eichinger L."/>
            <person name="Pachebat J.A."/>
            <person name="Gloeckner G."/>
            <person name="Rajandream M.A."/>
            <person name="Sucgang R."/>
            <person name="Berriman M."/>
            <person name="Song J."/>
            <person name="Olsen R."/>
            <person name="Szafranski K."/>
            <person name="Xu Q."/>
            <person name="Tunggal B."/>
            <person name="Kummerfeld S."/>
            <person name="Madera M."/>
            <person name="Konfortov B.A."/>
            <person name="Rivero F."/>
            <person name="Bankier A.T."/>
            <person name="Lehmann R."/>
            <person name="Hamlin N."/>
            <person name="Davies R."/>
            <person name="Gaudet P."/>
            <person name="Fey P."/>
            <person name="Pilcher K."/>
            <person name="Chen G."/>
            <person name="Saunders D."/>
            <person name="Sodergren E.J."/>
            <person name="Davis P."/>
            <person name="Kerhornou A."/>
            <person name="Nie X."/>
            <person name="Hall N."/>
            <person name="Anjard C."/>
            <person name="Hemphill L."/>
            <person name="Bason N."/>
            <person name="Farbrother P."/>
            <person name="Desany B."/>
            <person name="Just E."/>
            <person name="Morio T."/>
            <person name="Rost R."/>
            <person name="Churcher C.M."/>
            <person name="Cooper J."/>
            <person name="Haydock S."/>
            <person name="van Driessche N."/>
            <person name="Cronin A."/>
            <person name="Goodhead I."/>
            <person name="Muzny D.M."/>
            <person name="Mourier T."/>
            <person name="Pain A."/>
            <person name="Lu M."/>
            <person name="Harper D."/>
            <person name="Lindsay R."/>
            <person name="Hauser H."/>
            <person name="James K.D."/>
            <person name="Quiles M."/>
            <person name="Madan Babu M."/>
            <person name="Saito T."/>
            <person name="Buchrieser C."/>
            <person name="Wardroper A."/>
            <person name="Felder M."/>
            <person name="Thangavelu M."/>
            <person name="Johnson D."/>
            <person name="Knights A."/>
            <person name="Loulseged H."/>
            <person name="Mungall K.L."/>
            <person name="Oliver K."/>
            <person name="Price C."/>
            <person name="Quail M.A."/>
            <person name="Urushihara H."/>
            <person name="Hernandez J."/>
            <person name="Rabbinowitsch E."/>
            <person name="Steffen D."/>
            <person name="Sanders M."/>
            <person name="Ma J."/>
            <person name="Kohara Y."/>
            <person name="Sharp S."/>
            <person name="Simmonds M.N."/>
            <person name="Spiegler S."/>
            <person name="Tivey A."/>
            <person name="Sugano S."/>
            <person name="White B."/>
            <person name="Walker D."/>
            <person name="Woodward J.R."/>
            <person name="Winckler T."/>
            <person name="Tanaka Y."/>
            <person name="Shaulsky G."/>
            <person name="Schleicher M."/>
            <person name="Weinstock G.M."/>
            <person name="Rosenthal A."/>
            <person name="Cox E.C."/>
            <person name="Chisholm R.L."/>
            <person name="Gibbs R.A."/>
            <person name="Loomis W.F."/>
            <person name="Platzer M."/>
            <person name="Kay R.R."/>
            <person name="Williams J.G."/>
            <person name="Dear P.H."/>
            <person name="Noegel A.A."/>
            <person name="Barrell B.G."/>
            <person name="Kuspa A."/>
        </authorList>
    </citation>
    <scope>NUCLEOTIDE SEQUENCE [LARGE SCALE GENOMIC DNA]</scope>
    <source>
        <strain>AX4</strain>
    </source>
</reference>
<name>Y6053_DICDI</name>
<protein>
    <recommendedName>
        <fullName>Uncharacterized protein DDB_G0280579</fullName>
    </recommendedName>
</protein>
<gene>
    <name type="ORF">DDB_G0280579</name>
</gene>